<keyword id="KW-0067">ATP-binding</keyword>
<keyword id="KW-0997">Cell inner membrane</keyword>
<keyword id="KW-1003">Cell membrane</keyword>
<keyword id="KW-0963">Cytoplasm</keyword>
<keyword id="KW-0472">Membrane</keyword>
<keyword id="KW-0479">Metal-binding</keyword>
<keyword id="KW-0547">Nucleotide-binding</keyword>
<keyword id="KW-0653">Protein transport</keyword>
<keyword id="KW-1278">Translocase</keyword>
<keyword id="KW-0811">Translocation</keyword>
<keyword id="KW-0813">Transport</keyword>
<keyword id="KW-0862">Zinc</keyword>
<name>SECA_BUCA5</name>
<dbReference type="EC" id="7.4.2.8" evidence="1"/>
<dbReference type="EMBL" id="CP001161">
    <property type="protein sequence ID" value="ACL30571.1"/>
    <property type="molecule type" value="Genomic_DNA"/>
</dbReference>
<dbReference type="RefSeq" id="WP_009874158.1">
    <property type="nucleotide sequence ID" value="NC_011833.1"/>
</dbReference>
<dbReference type="SMR" id="B8D900"/>
<dbReference type="KEGG" id="bap:BUAP5A_198"/>
<dbReference type="HOGENOM" id="CLU_005314_3_0_6"/>
<dbReference type="OrthoDB" id="9805579at2"/>
<dbReference type="Proteomes" id="UP000006904">
    <property type="component" value="Chromosome"/>
</dbReference>
<dbReference type="GO" id="GO:0031522">
    <property type="term" value="C:cell envelope Sec protein transport complex"/>
    <property type="evidence" value="ECO:0007669"/>
    <property type="project" value="TreeGrafter"/>
</dbReference>
<dbReference type="GO" id="GO:0005829">
    <property type="term" value="C:cytosol"/>
    <property type="evidence" value="ECO:0007669"/>
    <property type="project" value="TreeGrafter"/>
</dbReference>
<dbReference type="GO" id="GO:0005886">
    <property type="term" value="C:plasma membrane"/>
    <property type="evidence" value="ECO:0007669"/>
    <property type="project" value="UniProtKB-SubCell"/>
</dbReference>
<dbReference type="GO" id="GO:0005524">
    <property type="term" value="F:ATP binding"/>
    <property type="evidence" value="ECO:0007669"/>
    <property type="project" value="UniProtKB-UniRule"/>
</dbReference>
<dbReference type="GO" id="GO:0046872">
    <property type="term" value="F:metal ion binding"/>
    <property type="evidence" value="ECO:0007669"/>
    <property type="project" value="UniProtKB-KW"/>
</dbReference>
<dbReference type="GO" id="GO:0008564">
    <property type="term" value="F:protein-exporting ATPase activity"/>
    <property type="evidence" value="ECO:0007669"/>
    <property type="project" value="UniProtKB-EC"/>
</dbReference>
<dbReference type="GO" id="GO:0065002">
    <property type="term" value="P:intracellular protein transmembrane transport"/>
    <property type="evidence" value="ECO:0007669"/>
    <property type="project" value="UniProtKB-UniRule"/>
</dbReference>
<dbReference type="GO" id="GO:0017038">
    <property type="term" value="P:protein import"/>
    <property type="evidence" value="ECO:0007669"/>
    <property type="project" value="InterPro"/>
</dbReference>
<dbReference type="GO" id="GO:0006605">
    <property type="term" value="P:protein targeting"/>
    <property type="evidence" value="ECO:0007669"/>
    <property type="project" value="UniProtKB-UniRule"/>
</dbReference>
<dbReference type="GO" id="GO:0043952">
    <property type="term" value="P:protein transport by the Sec complex"/>
    <property type="evidence" value="ECO:0007669"/>
    <property type="project" value="TreeGrafter"/>
</dbReference>
<dbReference type="CDD" id="cd17928">
    <property type="entry name" value="DEXDc_SecA"/>
    <property type="match status" value="1"/>
</dbReference>
<dbReference type="CDD" id="cd18803">
    <property type="entry name" value="SF2_C_secA"/>
    <property type="match status" value="1"/>
</dbReference>
<dbReference type="FunFam" id="3.40.50.300:FF:000113">
    <property type="entry name" value="Preprotein translocase subunit SecA"/>
    <property type="match status" value="1"/>
</dbReference>
<dbReference type="FunFam" id="3.90.1440.10:FF:000001">
    <property type="entry name" value="Preprotein translocase subunit SecA"/>
    <property type="match status" value="1"/>
</dbReference>
<dbReference type="FunFam" id="1.10.3060.10:FF:000003">
    <property type="entry name" value="Protein translocase subunit SecA"/>
    <property type="match status" value="1"/>
</dbReference>
<dbReference type="Gene3D" id="1.10.3060.10">
    <property type="entry name" value="Helical scaffold and wing domains of SecA"/>
    <property type="match status" value="1"/>
</dbReference>
<dbReference type="Gene3D" id="3.40.50.300">
    <property type="entry name" value="P-loop containing nucleotide triphosphate hydrolases"/>
    <property type="match status" value="2"/>
</dbReference>
<dbReference type="Gene3D" id="3.90.1440.10">
    <property type="entry name" value="SecA, preprotein cross-linking domain"/>
    <property type="match status" value="1"/>
</dbReference>
<dbReference type="HAMAP" id="MF_01382">
    <property type="entry name" value="SecA"/>
    <property type="match status" value="1"/>
</dbReference>
<dbReference type="InterPro" id="IPR014001">
    <property type="entry name" value="Helicase_ATP-bd"/>
</dbReference>
<dbReference type="InterPro" id="IPR001650">
    <property type="entry name" value="Helicase_C-like"/>
</dbReference>
<dbReference type="InterPro" id="IPR027417">
    <property type="entry name" value="P-loop_NTPase"/>
</dbReference>
<dbReference type="InterPro" id="IPR004027">
    <property type="entry name" value="SEC_C_motif"/>
</dbReference>
<dbReference type="InterPro" id="IPR000185">
    <property type="entry name" value="SecA"/>
</dbReference>
<dbReference type="InterPro" id="IPR020937">
    <property type="entry name" value="SecA_CS"/>
</dbReference>
<dbReference type="InterPro" id="IPR011115">
    <property type="entry name" value="SecA_DEAD"/>
</dbReference>
<dbReference type="InterPro" id="IPR014018">
    <property type="entry name" value="SecA_motor_DEAD"/>
</dbReference>
<dbReference type="InterPro" id="IPR011130">
    <property type="entry name" value="SecA_preprotein_X-link_dom"/>
</dbReference>
<dbReference type="InterPro" id="IPR044722">
    <property type="entry name" value="SecA_SF2_C"/>
</dbReference>
<dbReference type="InterPro" id="IPR011116">
    <property type="entry name" value="SecA_Wing/Scaffold"/>
</dbReference>
<dbReference type="InterPro" id="IPR036266">
    <property type="entry name" value="SecA_Wing/Scaffold_sf"/>
</dbReference>
<dbReference type="InterPro" id="IPR036670">
    <property type="entry name" value="SecA_X-link_sf"/>
</dbReference>
<dbReference type="NCBIfam" id="NF009538">
    <property type="entry name" value="PRK12904.1"/>
    <property type="match status" value="1"/>
</dbReference>
<dbReference type="NCBIfam" id="TIGR00963">
    <property type="entry name" value="secA"/>
    <property type="match status" value="1"/>
</dbReference>
<dbReference type="PANTHER" id="PTHR30612:SF0">
    <property type="entry name" value="CHLOROPLAST PROTEIN-TRANSPORTING ATPASE"/>
    <property type="match status" value="1"/>
</dbReference>
<dbReference type="PANTHER" id="PTHR30612">
    <property type="entry name" value="SECA INNER MEMBRANE COMPONENT OF SEC PROTEIN SECRETION SYSTEM"/>
    <property type="match status" value="1"/>
</dbReference>
<dbReference type="Pfam" id="PF21090">
    <property type="entry name" value="P-loop_SecA"/>
    <property type="match status" value="1"/>
</dbReference>
<dbReference type="Pfam" id="PF02810">
    <property type="entry name" value="SEC-C"/>
    <property type="match status" value="1"/>
</dbReference>
<dbReference type="Pfam" id="PF07517">
    <property type="entry name" value="SecA_DEAD"/>
    <property type="match status" value="1"/>
</dbReference>
<dbReference type="Pfam" id="PF01043">
    <property type="entry name" value="SecA_PP_bind"/>
    <property type="match status" value="1"/>
</dbReference>
<dbReference type="Pfam" id="PF07516">
    <property type="entry name" value="SecA_SW"/>
    <property type="match status" value="1"/>
</dbReference>
<dbReference type="PRINTS" id="PR00906">
    <property type="entry name" value="SECA"/>
</dbReference>
<dbReference type="SMART" id="SM00957">
    <property type="entry name" value="SecA_DEAD"/>
    <property type="match status" value="1"/>
</dbReference>
<dbReference type="SMART" id="SM00958">
    <property type="entry name" value="SecA_PP_bind"/>
    <property type="match status" value="1"/>
</dbReference>
<dbReference type="SUPFAM" id="SSF81886">
    <property type="entry name" value="Helical scaffold and wing domains of SecA"/>
    <property type="match status" value="1"/>
</dbReference>
<dbReference type="SUPFAM" id="SSF52540">
    <property type="entry name" value="P-loop containing nucleoside triphosphate hydrolases"/>
    <property type="match status" value="2"/>
</dbReference>
<dbReference type="SUPFAM" id="SSF81767">
    <property type="entry name" value="Pre-protein crosslinking domain of SecA"/>
    <property type="match status" value="1"/>
</dbReference>
<dbReference type="PROSITE" id="PS01312">
    <property type="entry name" value="SECA"/>
    <property type="match status" value="1"/>
</dbReference>
<dbReference type="PROSITE" id="PS51196">
    <property type="entry name" value="SECA_MOTOR_DEAD"/>
    <property type="match status" value="1"/>
</dbReference>
<proteinExistence type="inferred from homology"/>
<evidence type="ECO:0000255" key="1">
    <source>
        <dbReference type="HAMAP-Rule" id="MF_01382"/>
    </source>
</evidence>
<comment type="function">
    <text evidence="1">Part of the Sec protein translocase complex. Interacts with the SecYEG preprotein conducting channel. Has a central role in coupling the hydrolysis of ATP to the transfer of proteins into and across the cell membrane, serving both as a receptor for the preprotein-SecB complex and as an ATP-driven molecular motor driving the stepwise translocation of polypeptide chains across the membrane.</text>
</comment>
<comment type="catalytic activity">
    <reaction evidence="1">
        <text>ATP + H2O + cellular proteinSide 1 = ADP + phosphate + cellular proteinSide 2.</text>
        <dbReference type="EC" id="7.4.2.8"/>
    </reaction>
</comment>
<comment type="cofactor">
    <cofactor evidence="1">
        <name>Zn(2+)</name>
        <dbReference type="ChEBI" id="CHEBI:29105"/>
    </cofactor>
    <text evidence="1">May bind 1 zinc ion per subunit.</text>
</comment>
<comment type="subunit">
    <text evidence="1">Monomer and homodimer. Part of the essential Sec protein translocation apparatus which comprises SecA, SecYEG and auxiliary proteins SecDF-YajC and YidC.</text>
</comment>
<comment type="subcellular location">
    <subcellularLocation>
        <location evidence="1">Cell inner membrane</location>
        <topology evidence="1">Peripheral membrane protein</topology>
        <orientation evidence="1">Cytoplasmic side</orientation>
    </subcellularLocation>
    <subcellularLocation>
        <location evidence="1">Cytoplasm</location>
    </subcellularLocation>
    <text evidence="1">Distribution is 50-50.</text>
</comment>
<comment type="induction">
    <text evidence="1">Repressed under conditions of excess protein secretion capacity and derepressed when protein secretion becomes limiting. This is regulated by SecM.</text>
</comment>
<comment type="similarity">
    <text evidence="1">Belongs to the SecA family.</text>
</comment>
<gene>
    <name evidence="1" type="primary">secA</name>
    <name type="ordered locus">BUAP5A_198</name>
</gene>
<sequence length="875" mass="100888">MLIQFLTKIFSNHNNRILKKFKKIVLSVNKLEKNFEKLSDKELQAQTELFRLRLRNGETLDDILPEAFALVREASKRVFSMRHFDVQILGGIALNKQCIAEMRTGEGKTLTSTLPAYLNALNGKGVHIVTMNDYLARRDAEKNTPLFEFLGLTVGLNLSEMSFFSKRKAYLSDITYGTNNEYGFDYLRDNMVFSPEERVQRKLNYALVDEVDSILIDEARTPLIISGPSEDSSELYKEINKIVPFLNSQKKEDSDIFCGTGDFSIDEKSKQIYLTERGLIKVEKILFDKKLMNTGESLYSSNNIILMHHVLSALRAHKLFVRNVDYLVKDNSVIIVDEHTGRTMPGRRWSDGLHQAIEAKENVSIKNENQTLASITFQNYFRLYEKIAGMTGTAETESFEFNSIYNLDTIVIPTNRKMIRKDFPDLVYMTEKEKINAIIQDIQKCIKLNQPVLVGTVSIEKSEIISKELLKLNINHNVLNAKFHAKEAEIIAQAGKPGSITIATNMAGRGTDIVLGGNLEVELNKYKNITSRKIEEIKKKWQSEHDLVVSAGGLHIIGTERHESRRIDNQLRGRSGRQGDTGSSRFYLSMEDSLMRIFASDKIVHMMKKLGLAFNEAIEHSWVTKAIENAQKKVENRNFDIRKQLLEYDDVINEQRSAIYSQRNKLIDARDIKLMIYDIFKDVLKKNIILYIPKNTFHDKWNVTDLKDKLNIDFYLNAPILDWINIEPNLTDKKIIKRIIDFARINYKNKEILIGSNNMRIIEKIIMLQTLDSLWKEHLAAVDYLRQGIHLRGYAQKDPKQEYKRESFNMFSSMLELLKFEVVSFLSRINSSYAKKYIDLNKHLVITHNNTMKISRNSPCLCGSGKKYKYCHGSL</sequence>
<protein>
    <recommendedName>
        <fullName evidence="1">Protein translocase subunit SecA</fullName>
        <ecNumber evidence="1">7.4.2.8</ecNumber>
    </recommendedName>
</protein>
<organism>
    <name type="scientific">Buchnera aphidicola subsp. Acyrthosiphon pisum (strain 5A)</name>
    <dbReference type="NCBI Taxonomy" id="563178"/>
    <lineage>
        <taxon>Bacteria</taxon>
        <taxon>Pseudomonadati</taxon>
        <taxon>Pseudomonadota</taxon>
        <taxon>Gammaproteobacteria</taxon>
        <taxon>Enterobacterales</taxon>
        <taxon>Erwiniaceae</taxon>
        <taxon>Buchnera</taxon>
    </lineage>
</organism>
<feature type="chain" id="PRO_1000184219" description="Protein translocase subunit SecA">
    <location>
        <begin position="1"/>
        <end position="875"/>
    </location>
</feature>
<feature type="binding site" evidence="1">
    <location>
        <position position="87"/>
    </location>
    <ligand>
        <name>ATP</name>
        <dbReference type="ChEBI" id="CHEBI:30616"/>
    </ligand>
</feature>
<feature type="binding site" evidence="1">
    <location>
        <begin position="105"/>
        <end position="109"/>
    </location>
    <ligand>
        <name>ATP</name>
        <dbReference type="ChEBI" id="CHEBI:30616"/>
    </ligand>
</feature>
<feature type="binding site" evidence="1">
    <location>
        <position position="512"/>
    </location>
    <ligand>
        <name>ATP</name>
        <dbReference type="ChEBI" id="CHEBI:30616"/>
    </ligand>
</feature>
<feature type="binding site" evidence="1">
    <location>
        <position position="860"/>
    </location>
    <ligand>
        <name>Zn(2+)</name>
        <dbReference type="ChEBI" id="CHEBI:29105"/>
    </ligand>
</feature>
<feature type="binding site" evidence="1">
    <location>
        <position position="862"/>
    </location>
    <ligand>
        <name>Zn(2+)</name>
        <dbReference type="ChEBI" id="CHEBI:29105"/>
    </ligand>
</feature>
<feature type="binding site" evidence="1">
    <location>
        <position position="871"/>
    </location>
    <ligand>
        <name>Zn(2+)</name>
        <dbReference type="ChEBI" id="CHEBI:29105"/>
    </ligand>
</feature>
<feature type="binding site" evidence="1">
    <location>
        <position position="872"/>
    </location>
    <ligand>
        <name>Zn(2+)</name>
        <dbReference type="ChEBI" id="CHEBI:29105"/>
    </ligand>
</feature>
<accession>B8D900</accession>
<reference key="1">
    <citation type="journal article" date="2009" name="Science">
        <title>The dynamics and time scale of ongoing genomic erosion in symbiotic bacteria.</title>
        <authorList>
            <person name="Moran N.A."/>
            <person name="McLaughlin H.J."/>
            <person name="Sorek R."/>
        </authorList>
    </citation>
    <scope>NUCLEOTIDE SEQUENCE [LARGE SCALE GENOMIC DNA]</scope>
    <source>
        <strain>5A</strain>
    </source>
</reference>